<organism>
    <name type="scientific">Homo sapiens</name>
    <name type="common">Human</name>
    <dbReference type="NCBI Taxonomy" id="9606"/>
    <lineage>
        <taxon>Eukaryota</taxon>
        <taxon>Metazoa</taxon>
        <taxon>Chordata</taxon>
        <taxon>Craniata</taxon>
        <taxon>Vertebrata</taxon>
        <taxon>Euteleostomi</taxon>
        <taxon>Mammalia</taxon>
        <taxon>Eutheria</taxon>
        <taxon>Euarchontoglires</taxon>
        <taxon>Primates</taxon>
        <taxon>Haplorrhini</taxon>
        <taxon>Catarrhini</taxon>
        <taxon>Hominidae</taxon>
        <taxon>Homo</taxon>
    </lineage>
</organism>
<proteinExistence type="uncertain"/>
<gene>
    <name type="primary">DPY19L2P2</name>
</gene>
<protein>
    <recommendedName>
        <fullName>Putative C-mannosyltransferase DPY19L2P2</fullName>
        <ecNumber>2.4.1.-</ecNumber>
    </recommendedName>
    <alternativeName>
        <fullName>Dpy-19-like protein 2 pseudogene 2</fullName>
    </alternativeName>
    <alternativeName>
        <fullName>Protein dpy-19 homolog 2-like 2</fullName>
    </alternativeName>
</protein>
<comment type="function">
    <text evidence="1">Probable C-mannosyltransferase that mediates C-mannosylation of tryptophan residues on target proteins.</text>
</comment>
<comment type="subcellular location">
    <subcellularLocation>
        <location evidence="6">Membrane</location>
        <topology evidence="6">Multi-pass membrane protein</topology>
    </subcellularLocation>
</comment>
<comment type="alternative products">
    <event type="alternative splicing"/>
    <isoform>
        <id>Q6ZN68-1</id>
        <name>1</name>
        <sequence type="displayed"/>
    </isoform>
    <isoform>
        <id>Q6ZN68-2</id>
        <name>2</name>
        <sequence type="described" ref="VSP_033400 VSP_033401"/>
    </isoform>
    <isoform>
        <id>Q6ZN68-3</id>
        <name>3</name>
        <sequence type="described" ref="VSP_033399 VSP_033401"/>
    </isoform>
</comment>
<comment type="tissue specificity">
    <text evidence="3">Fibroblast, lung, lymphoblast, spleen and testis.</text>
</comment>
<comment type="similarity">
    <text evidence="6">Belongs to the dpy-19 family.</text>
</comment>
<comment type="caution">
    <text evidence="6">Could be the product of a pseudogene.</text>
</comment>
<accession>Q6ZN68</accession>
<accession>Q8N9V4</accession>
<accession>Q8ND62</accession>
<dbReference type="EC" id="2.4.1.-"/>
<dbReference type="EMBL" id="AK093485">
    <property type="protein sequence ID" value="BAC04183.1"/>
    <property type="molecule type" value="mRNA"/>
</dbReference>
<dbReference type="EMBL" id="AK131353">
    <property type="protein sequence ID" value="BAD18507.1"/>
    <property type="molecule type" value="mRNA"/>
</dbReference>
<dbReference type="EMBL" id="AL834175">
    <property type="protein sequence ID" value="CAD38872.1"/>
    <property type="molecule type" value="mRNA"/>
</dbReference>
<dbReference type="EMBL" id="CH471070">
    <property type="protein sequence ID" value="EAW83318.1"/>
    <property type="molecule type" value="Genomic_DNA"/>
</dbReference>
<dbReference type="SMR" id="Q6ZN68"/>
<dbReference type="FunCoup" id="Q6ZN68">
    <property type="interactions" value="14"/>
</dbReference>
<dbReference type="GlyCosmos" id="Q6ZN68">
    <property type="glycosylation" value="1 site, No reported glycans"/>
</dbReference>
<dbReference type="GlyGen" id="Q6ZN68">
    <property type="glycosylation" value="1 site"/>
</dbReference>
<dbReference type="BioMuta" id="HGNC:21764"/>
<dbReference type="DMDM" id="187471076"/>
<dbReference type="MassIVE" id="Q6ZN68"/>
<dbReference type="PeptideAtlas" id="Q6ZN68"/>
<dbReference type="AGR" id="HGNC:21764"/>
<dbReference type="GeneCards" id="DPY19L2P2"/>
<dbReference type="HGNC" id="HGNC:21764">
    <property type="gene designation" value="DPY19L2P2"/>
</dbReference>
<dbReference type="neXtProt" id="NX_Q6ZN68"/>
<dbReference type="InParanoid" id="Q6ZN68"/>
<dbReference type="PAN-GO" id="Q6ZN68">
    <property type="GO annotations" value="0 GO annotations based on evolutionary models"/>
</dbReference>
<dbReference type="PhylomeDB" id="Q6ZN68"/>
<dbReference type="PathwayCommons" id="Q6ZN68"/>
<dbReference type="ChiTaRS" id="DPY19L2P2">
    <property type="organism name" value="human"/>
</dbReference>
<dbReference type="Pharos" id="Q6ZN68">
    <property type="development level" value="Tdark"/>
</dbReference>
<dbReference type="PRO" id="PR:Q6ZN68"/>
<dbReference type="Proteomes" id="UP000005640">
    <property type="component" value="Unplaced"/>
</dbReference>
<dbReference type="RNAct" id="Q6ZN68">
    <property type="molecule type" value="protein"/>
</dbReference>
<dbReference type="GO" id="GO:0005637">
    <property type="term" value="C:nuclear inner membrane"/>
    <property type="evidence" value="ECO:0000318"/>
    <property type="project" value="GO_Central"/>
</dbReference>
<dbReference type="GO" id="GO:0000030">
    <property type="term" value="F:mannosyltransferase activity"/>
    <property type="evidence" value="ECO:0000318"/>
    <property type="project" value="GO_Central"/>
</dbReference>
<dbReference type="GO" id="GO:0007286">
    <property type="term" value="P:spermatid development"/>
    <property type="evidence" value="ECO:0000318"/>
    <property type="project" value="GO_Central"/>
</dbReference>
<dbReference type="InterPro" id="IPR018732">
    <property type="entry name" value="Dpy-19/Dpy-19-like"/>
</dbReference>
<dbReference type="PANTHER" id="PTHR31488:SF6">
    <property type="entry name" value="C-MANNOSYLTRANSFERASE DPY19L2-RELATED"/>
    <property type="match status" value="1"/>
</dbReference>
<dbReference type="PANTHER" id="PTHR31488">
    <property type="entry name" value="DPY-19-LIKE 1, LIKE (H. SAPIENS)"/>
    <property type="match status" value="1"/>
</dbReference>
<dbReference type="Pfam" id="PF10034">
    <property type="entry name" value="Dpy19"/>
    <property type="match status" value="1"/>
</dbReference>
<name>D19P2_HUMAN</name>
<sequence length="376" mass="43060">MADSRRVIIASWYRTFMGIVNLFGLETKTCWNVTRIEPLNEVQSCEGLRDPACFYVGVIFILNGLMMGLFFIYGTYLSGTELGGLITVLCFFFNHGEATCVMWTPPLRESFSYPFLVLQMYVLTLILRTSSNDRRPFIALCLSNVAFMLPWQFAQFILFTQIASLFPMYVVGYIEPSKFQKIIYMNMISVTLSFILMFGNSMYLSSYYSSSLLMTWAIILKRNEIQKLGVSKLNCWLIQGSAWWCGTIILKFLTSKILGVSDHICLSDLIAAGILRYTDFDTLKYTCSPEFDFMEKATLLIYTKTLLLPVVMVITCFIFKKTVGDISRVLATNVYLRCCLCRCHAYNGKCQAVYTSSHCESSTLRRCRLEAWLQHA</sequence>
<feature type="chain" id="PRO_0000332965" description="Putative C-mannosyltransferase DPY19L2P2">
    <location>
        <begin position="1"/>
        <end position="376"/>
    </location>
</feature>
<feature type="transmembrane region" description="Helical" evidence="2">
    <location>
        <begin position="52"/>
        <end position="72"/>
    </location>
</feature>
<feature type="transmembrane region" description="Helical" evidence="2">
    <location>
        <begin position="107"/>
        <end position="127"/>
    </location>
</feature>
<feature type="transmembrane region" description="Helical" evidence="2">
    <location>
        <begin position="154"/>
        <end position="174"/>
    </location>
</feature>
<feature type="transmembrane region" description="Helical" evidence="2">
    <location>
        <begin position="182"/>
        <end position="202"/>
    </location>
</feature>
<feature type="transmembrane region" description="Helical" evidence="2">
    <location>
        <begin position="233"/>
        <end position="253"/>
    </location>
</feature>
<feature type="transmembrane region" description="Helical" evidence="2">
    <location>
        <begin position="299"/>
        <end position="319"/>
    </location>
</feature>
<feature type="glycosylation site" description="N-linked (GlcNAc...) asparagine" evidence="2">
    <location>
        <position position="32"/>
    </location>
</feature>
<feature type="splice variant" id="VSP_033399" description="In isoform 3." evidence="5">
    <location>
        <begin position="1"/>
        <end position="147"/>
    </location>
</feature>
<feature type="splice variant" id="VSP_033400" description="In isoform 2." evidence="4">
    <location>
        <begin position="1"/>
        <end position="65"/>
    </location>
</feature>
<feature type="splice variant" id="VSP_033401" description="In isoform 2 and isoform 3." evidence="4 5">
    <original>CCLCRCHAYNGKCQAVYTSSHCESSTLRRCRLEAWLQHA</original>
    <variation>KQLLEHSELAFHTLQLLAFTALAILILRLKLFLTQHMCVMASLICS</variation>
    <location>
        <begin position="338"/>
        <end position="376"/>
    </location>
</feature>
<feature type="sequence variant" id="VAR_043009" description="In dbSNP:rs7796589.">
    <original>M</original>
    <variation>V</variation>
    <location>
        <position position="66"/>
    </location>
</feature>
<feature type="sequence variant" id="VAR_043010" description="In dbSNP:rs17136078.">
    <original>N</original>
    <variation>I</variation>
    <location>
        <position position="333"/>
    </location>
</feature>
<feature type="sequence conflict" description="In Ref. 1; BAD18507." evidence="6" ref="1">
    <original>I</original>
    <variation>T</variation>
    <location>
        <position position="274"/>
    </location>
</feature>
<keyword id="KW-0025">Alternative splicing</keyword>
<keyword id="KW-0325">Glycoprotein</keyword>
<keyword id="KW-0328">Glycosyltransferase</keyword>
<keyword id="KW-0472">Membrane</keyword>
<keyword id="KW-1185">Reference proteome</keyword>
<keyword id="KW-0808">Transferase</keyword>
<keyword id="KW-0812">Transmembrane</keyword>
<keyword id="KW-1133">Transmembrane helix</keyword>
<reference key="1">
    <citation type="journal article" date="2004" name="Nat. Genet.">
        <title>Complete sequencing and characterization of 21,243 full-length human cDNAs.</title>
        <authorList>
            <person name="Ota T."/>
            <person name="Suzuki Y."/>
            <person name="Nishikawa T."/>
            <person name="Otsuki T."/>
            <person name="Sugiyama T."/>
            <person name="Irie R."/>
            <person name="Wakamatsu A."/>
            <person name="Hayashi K."/>
            <person name="Sato H."/>
            <person name="Nagai K."/>
            <person name="Kimura K."/>
            <person name="Makita H."/>
            <person name="Sekine M."/>
            <person name="Obayashi M."/>
            <person name="Nishi T."/>
            <person name="Shibahara T."/>
            <person name="Tanaka T."/>
            <person name="Ishii S."/>
            <person name="Yamamoto J."/>
            <person name="Saito K."/>
            <person name="Kawai Y."/>
            <person name="Isono Y."/>
            <person name="Nakamura Y."/>
            <person name="Nagahari K."/>
            <person name="Murakami K."/>
            <person name="Yasuda T."/>
            <person name="Iwayanagi T."/>
            <person name="Wagatsuma M."/>
            <person name="Shiratori A."/>
            <person name="Sudo H."/>
            <person name="Hosoiri T."/>
            <person name="Kaku Y."/>
            <person name="Kodaira H."/>
            <person name="Kondo H."/>
            <person name="Sugawara M."/>
            <person name="Takahashi M."/>
            <person name="Kanda K."/>
            <person name="Yokoi T."/>
            <person name="Furuya T."/>
            <person name="Kikkawa E."/>
            <person name="Omura Y."/>
            <person name="Abe K."/>
            <person name="Kamihara K."/>
            <person name="Katsuta N."/>
            <person name="Sato K."/>
            <person name="Tanikawa M."/>
            <person name="Yamazaki M."/>
            <person name="Ninomiya K."/>
            <person name="Ishibashi T."/>
            <person name="Yamashita H."/>
            <person name="Murakawa K."/>
            <person name="Fujimori K."/>
            <person name="Tanai H."/>
            <person name="Kimata M."/>
            <person name="Watanabe M."/>
            <person name="Hiraoka S."/>
            <person name="Chiba Y."/>
            <person name="Ishida S."/>
            <person name="Ono Y."/>
            <person name="Takiguchi S."/>
            <person name="Watanabe S."/>
            <person name="Yosida M."/>
            <person name="Hotuta T."/>
            <person name="Kusano J."/>
            <person name="Kanehori K."/>
            <person name="Takahashi-Fujii A."/>
            <person name="Hara H."/>
            <person name="Tanase T.-O."/>
            <person name="Nomura Y."/>
            <person name="Togiya S."/>
            <person name="Komai F."/>
            <person name="Hara R."/>
            <person name="Takeuchi K."/>
            <person name="Arita M."/>
            <person name="Imose N."/>
            <person name="Musashino K."/>
            <person name="Yuuki H."/>
            <person name="Oshima A."/>
            <person name="Sasaki N."/>
            <person name="Aotsuka S."/>
            <person name="Yoshikawa Y."/>
            <person name="Matsunawa H."/>
            <person name="Ichihara T."/>
            <person name="Shiohata N."/>
            <person name="Sano S."/>
            <person name="Moriya S."/>
            <person name="Momiyama H."/>
            <person name="Satoh N."/>
            <person name="Takami S."/>
            <person name="Terashima Y."/>
            <person name="Suzuki O."/>
            <person name="Nakagawa S."/>
            <person name="Senoh A."/>
            <person name="Mizoguchi H."/>
            <person name="Goto Y."/>
            <person name="Shimizu F."/>
            <person name="Wakebe H."/>
            <person name="Hishigaki H."/>
            <person name="Watanabe T."/>
            <person name="Sugiyama A."/>
            <person name="Takemoto M."/>
            <person name="Kawakami B."/>
            <person name="Yamazaki M."/>
            <person name="Watanabe K."/>
            <person name="Kumagai A."/>
            <person name="Itakura S."/>
            <person name="Fukuzumi Y."/>
            <person name="Fujimori Y."/>
            <person name="Komiyama M."/>
            <person name="Tashiro H."/>
            <person name="Tanigami A."/>
            <person name="Fujiwara T."/>
            <person name="Ono T."/>
            <person name="Yamada K."/>
            <person name="Fujii Y."/>
            <person name="Ozaki K."/>
            <person name="Hirao M."/>
            <person name="Ohmori Y."/>
            <person name="Kawabata A."/>
            <person name="Hikiji T."/>
            <person name="Kobatake N."/>
            <person name="Inagaki H."/>
            <person name="Ikema Y."/>
            <person name="Okamoto S."/>
            <person name="Okitani R."/>
            <person name="Kawakami T."/>
            <person name="Noguchi S."/>
            <person name="Itoh T."/>
            <person name="Shigeta K."/>
            <person name="Senba T."/>
            <person name="Matsumura K."/>
            <person name="Nakajima Y."/>
            <person name="Mizuno T."/>
            <person name="Morinaga M."/>
            <person name="Sasaki M."/>
            <person name="Togashi T."/>
            <person name="Oyama M."/>
            <person name="Hata H."/>
            <person name="Watanabe M."/>
            <person name="Komatsu T."/>
            <person name="Mizushima-Sugano J."/>
            <person name="Satoh T."/>
            <person name="Shirai Y."/>
            <person name="Takahashi Y."/>
            <person name="Nakagawa K."/>
            <person name="Okumura K."/>
            <person name="Nagase T."/>
            <person name="Nomura N."/>
            <person name="Kikuchi H."/>
            <person name="Masuho Y."/>
            <person name="Yamashita R."/>
            <person name="Nakai K."/>
            <person name="Yada T."/>
            <person name="Nakamura Y."/>
            <person name="Ohara O."/>
            <person name="Isogai T."/>
            <person name="Sugano S."/>
        </authorList>
    </citation>
    <scope>NUCLEOTIDE SEQUENCE [LARGE SCALE MRNA] (ISOFORMS 1 AND 2)</scope>
    <source>
        <tissue>Kidney</tissue>
        <tissue>Testis</tissue>
    </source>
</reference>
<reference key="2">
    <citation type="journal article" date="2007" name="BMC Genomics">
        <title>The full-ORF clone resource of the German cDNA consortium.</title>
        <authorList>
            <person name="Bechtel S."/>
            <person name="Rosenfelder H."/>
            <person name="Duda A."/>
            <person name="Schmidt C.P."/>
            <person name="Ernst U."/>
            <person name="Wellenreuther R."/>
            <person name="Mehrle A."/>
            <person name="Schuster C."/>
            <person name="Bahr A."/>
            <person name="Bloecker H."/>
            <person name="Heubner D."/>
            <person name="Hoerlein A."/>
            <person name="Michel G."/>
            <person name="Wedler H."/>
            <person name="Koehrer K."/>
            <person name="Ottenwaelder B."/>
            <person name="Poustka A."/>
            <person name="Wiemann S."/>
            <person name="Schupp I."/>
        </authorList>
    </citation>
    <scope>NUCLEOTIDE SEQUENCE [LARGE SCALE MRNA] (ISOFORM 3)</scope>
    <source>
        <tissue>Testis</tissue>
    </source>
</reference>
<reference key="3">
    <citation type="submission" date="2005-07" db="EMBL/GenBank/DDBJ databases">
        <authorList>
            <person name="Mural R.J."/>
            <person name="Istrail S."/>
            <person name="Sutton G.G."/>
            <person name="Florea L."/>
            <person name="Halpern A.L."/>
            <person name="Mobarry C.M."/>
            <person name="Lippert R."/>
            <person name="Walenz B."/>
            <person name="Shatkay H."/>
            <person name="Dew I."/>
            <person name="Miller J.R."/>
            <person name="Flanigan M.J."/>
            <person name="Edwards N.J."/>
            <person name="Bolanos R."/>
            <person name="Fasulo D."/>
            <person name="Halldorsson B.V."/>
            <person name="Hannenhalli S."/>
            <person name="Turner R."/>
            <person name="Yooseph S."/>
            <person name="Lu F."/>
            <person name="Nusskern D.R."/>
            <person name="Shue B.C."/>
            <person name="Zheng X.H."/>
            <person name="Zhong F."/>
            <person name="Delcher A.L."/>
            <person name="Huson D.H."/>
            <person name="Kravitz S.A."/>
            <person name="Mouchard L."/>
            <person name="Reinert K."/>
            <person name="Remington K.A."/>
            <person name="Clark A.G."/>
            <person name="Waterman M.S."/>
            <person name="Eichler E.E."/>
            <person name="Adams M.D."/>
            <person name="Hunkapiller M.W."/>
            <person name="Myers E.W."/>
            <person name="Venter J.C."/>
        </authorList>
    </citation>
    <scope>NUCLEOTIDE SEQUENCE [LARGE SCALE GENOMIC DNA]</scope>
</reference>
<reference key="4">
    <citation type="journal article" date="2006" name="BMC Genomics">
        <title>Duplication and relocation of the functional DPY19L2 gene within low copy repeats.</title>
        <authorList>
            <person name="Carson A.R."/>
            <person name="Cheung J."/>
            <person name="Scherer S.W."/>
        </authorList>
    </citation>
    <scope>GENE DUPLICATION</scope>
    <scope>TISSUE SPECIFICITY</scope>
</reference>
<evidence type="ECO:0000250" key="1"/>
<evidence type="ECO:0000255" key="2"/>
<evidence type="ECO:0000269" key="3">
    <source>
    </source>
</evidence>
<evidence type="ECO:0000303" key="4">
    <source>
    </source>
</evidence>
<evidence type="ECO:0000303" key="5">
    <source>
    </source>
</evidence>
<evidence type="ECO:0000305" key="6"/>